<organism>
    <name type="scientific">Halobacterium salinarum (strain ATCC 700922 / JCM 11081 / NRC-1)</name>
    <name type="common">Halobacterium halobium</name>
    <dbReference type="NCBI Taxonomy" id="64091"/>
    <lineage>
        <taxon>Archaea</taxon>
        <taxon>Methanobacteriati</taxon>
        <taxon>Methanobacteriota</taxon>
        <taxon>Stenosarchaea group</taxon>
        <taxon>Halobacteria</taxon>
        <taxon>Halobacteriales</taxon>
        <taxon>Halobacteriaceae</taxon>
        <taxon>Halobacterium</taxon>
        <taxon>Halobacterium salinarum NRC-34001</taxon>
    </lineage>
</organism>
<gene>
    <name evidence="1" type="primary">uvrB</name>
    <name type="ordered locus">VNG_2390G</name>
</gene>
<keyword id="KW-0067">ATP-binding</keyword>
<keyword id="KW-0963">Cytoplasm</keyword>
<keyword id="KW-0227">DNA damage</keyword>
<keyword id="KW-0228">DNA excision</keyword>
<keyword id="KW-0234">DNA repair</keyword>
<keyword id="KW-0267">Excision nuclease</keyword>
<keyword id="KW-0547">Nucleotide-binding</keyword>
<keyword id="KW-1185">Reference proteome</keyword>
<keyword id="KW-0742">SOS response</keyword>
<comment type="function">
    <text evidence="1">The UvrABC repair system catalyzes the recognition and processing of DNA lesions. A damage recognition complex composed of 2 UvrA and 2 UvrB subunits scans DNA for abnormalities. Upon binding of the UvrA(2)B(2) complex to a putative damaged site, the DNA wraps around one UvrB monomer. DNA wrap is dependent on ATP binding by UvrB and probably causes local melting of the DNA helix, facilitating insertion of UvrB beta-hairpin between the DNA strands. Then UvrB probes one DNA strand for the presence of a lesion. If a lesion is found the UvrA subunits dissociate and the UvrB-DNA preincision complex is formed. This complex is subsequently bound by UvrC and the second UvrB is released. If no lesion is found, the DNA wraps around the other UvrB subunit that will check the other stand for damage.</text>
</comment>
<comment type="subunit">
    <text evidence="1">Forms a heterotetramer with UvrA during the search for lesions. Interacts with UvrC in an incision complex.</text>
</comment>
<comment type="subcellular location">
    <subcellularLocation>
        <location evidence="1">Cytoplasm</location>
    </subcellularLocation>
</comment>
<comment type="domain">
    <text evidence="1">The beta-hairpin motif is involved in DNA binding.</text>
</comment>
<comment type="similarity">
    <text evidence="1">Belongs to the UvrB family.</text>
</comment>
<evidence type="ECO:0000255" key="1">
    <source>
        <dbReference type="HAMAP-Rule" id="MF_00204"/>
    </source>
</evidence>
<evidence type="ECO:0000256" key="2">
    <source>
        <dbReference type="SAM" id="MobiDB-lite"/>
    </source>
</evidence>
<sequence length="689" mass="77507">MSDASGPLQPDRPEADVPFRVEAPFDPAGDQPDAIAELVAGYEQGAQQQTLLGVTGSGKTNTVSWVVEELQQPTLVIAHNKTLAAQLYEEFRSLFPDNAVEYFVSYYNYYQPEAYVEQTDKYIEKDASINDEIDRLRHSATRSLLTRDDVIVVASVSAIYGLGDPRNYEEMSLRVERGQSIGRDQLLAKLVDLNYDRNDVDFTQGTFRVRGDTVEVYPMYGRYPVRVEFWGDEIDRMAKLDPLEGTVESEEPAVLFHPAEHYSVPDAEMEQAIERIRTDMHERVRHFERTGDMVAAQRIEERTTFDLEMMAEAGYCSGIENYSVYLSDREVGDAPYTLLDYFPDDFLTVIDESHRTVPQIKGQYEGDKSRKDSLVDNGFRLPTAYDNRPLTFAEFADKTDRTLYVSATPGDHERAQSANVVEQIVRPTHLVDPDISIADATGQVEDLMDRIDERVARDERVLVTTLTKRMAEDLTEYLEEAGVAVEYMHDETDTLERHELVRGLRLGEYDVLVGINLLREGLDIPEVSLVAILDADQQGFLRSETSLVQTMGRAARNVNGEVVLYADETTDAMQAAIDETQRRRRIQRAFNEDHGTTPTTIEKAVGDMNLPGAETDTADVAGDAPSDEQEAALLVEDLEARMEDAASNLEFELAADIRDRMRELREAFDLDGGDAPEDPGGVAPETEDW</sequence>
<proteinExistence type="inferred from homology"/>
<accession>Q9HMT9</accession>
<feature type="chain" id="PRO_0000138453" description="UvrABC system protein B">
    <location>
        <begin position="1"/>
        <end position="689"/>
    </location>
</feature>
<feature type="domain" description="Helicase ATP-binding" evidence="1">
    <location>
        <begin position="40"/>
        <end position="422"/>
    </location>
</feature>
<feature type="domain" description="Helicase C-terminal" evidence="1">
    <location>
        <begin position="443"/>
        <end position="605"/>
    </location>
</feature>
<feature type="domain" description="UVR" evidence="1">
    <location>
        <begin position="632"/>
        <end position="667"/>
    </location>
</feature>
<feature type="region of interest" description="Disordered" evidence="2">
    <location>
        <begin position="1"/>
        <end position="26"/>
    </location>
</feature>
<feature type="region of interest" description="Disordered" evidence="2">
    <location>
        <begin position="668"/>
        <end position="689"/>
    </location>
</feature>
<feature type="short sequence motif" description="Beta-hairpin">
    <location>
        <begin position="106"/>
        <end position="129"/>
    </location>
</feature>
<feature type="binding site" evidence="1">
    <location>
        <begin position="53"/>
        <end position="60"/>
    </location>
    <ligand>
        <name>ATP</name>
        <dbReference type="ChEBI" id="CHEBI:30616"/>
    </ligand>
</feature>
<name>UVRB_HALSA</name>
<reference key="1">
    <citation type="journal article" date="2000" name="Proc. Natl. Acad. Sci. U.S.A.">
        <title>Genome sequence of Halobacterium species NRC-1.</title>
        <authorList>
            <person name="Ng W.V."/>
            <person name="Kennedy S.P."/>
            <person name="Mahairas G.G."/>
            <person name="Berquist B."/>
            <person name="Pan M."/>
            <person name="Shukla H.D."/>
            <person name="Lasky S.R."/>
            <person name="Baliga N.S."/>
            <person name="Thorsson V."/>
            <person name="Sbrogna J."/>
            <person name="Swartzell S."/>
            <person name="Weir D."/>
            <person name="Hall J."/>
            <person name="Dahl T.A."/>
            <person name="Welti R."/>
            <person name="Goo Y.A."/>
            <person name="Leithauser B."/>
            <person name="Keller K."/>
            <person name="Cruz R."/>
            <person name="Danson M.J."/>
            <person name="Hough D.W."/>
            <person name="Maddocks D.G."/>
            <person name="Jablonski P.E."/>
            <person name="Krebs M.P."/>
            <person name="Angevine C.M."/>
            <person name="Dale H."/>
            <person name="Isenbarger T.A."/>
            <person name="Peck R.F."/>
            <person name="Pohlschroder M."/>
            <person name="Spudich J.L."/>
            <person name="Jung K.-H."/>
            <person name="Alam M."/>
            <person name="Freitas T."/>
            <person name="Hou S."/>
            <person name="Daniels C.J."/>
            <person name="Dennis P.P."/>
            <person name="Omer A.D."/>
            <person name="Ebhardt H."/>
            <person name="Lowe T.M."/>
            <person name="Liang P."/>
            <person name="Riley M."/>
            <person name="Hood L."/>
            <person name="DasSarma S."/>
        </authorList>
    </citation>
    <scope>NUCLEOTIDE SEQUENCE [LARGE SCALE GENOMIC DNA]</scope>
    <source>
        <strain>ATCC 700922 / JCM 11081 / NRC-1</strain>
    </source>
</reference>
<protein>
    <recommendedName>
        <fullName evidence="1">UvrABC system protein B</fullName>
        <shortName evidence="1">Protein UvrB</shortName>
    </recommendedName>
    <alternativeName>
        <fullName evidence="1">Excinuclease ABC subunit B</fullName>
    </alternativeName>
</protein>
<dbReference type="EMBL" id="AE004437">
    <property type="protein sequence ID" value="AAG20482.1"/>
    <property type="molecule type" value="Genomic_DNA"/>
</dbReference>
<dbReference type="PIR" id="F84389">
    <property type="entry name" value="F84389"/>
</dbReference>
<dbReference type="RefSeq" id="WP_010903784.1">
    <property type="nucleotide sequence ID" value="NC_002607.1"/>
</dbReference>
<dbReference type="SMR" id="Q9HMT9"/>
<dbReference type="STRING" id="64091.VNG_2390G"/>
<dbReference type="PaxDb" id="64091-VNG_2390G"/>
<dbReference type="GeneID" id="89348411"/>
<dbReference type="KEGG" id="hal:VNG_2390G"/>
<dbReference type="PATRIC" id="fig|64091.14.peg.1850"/>
<dbReference type="HOGENOM" id="CLU_009621_2_1_2"/>
<dbReference type="InParanoid" id="Q9HMT9"/>
<dbReference type="OrthoDB" id="8371at2157"/>
<dbReference type="PhylomeDB" id="Q9HMT9"/>
<dbReference type="Proteomes" id="UP000000554">
    <property type="component" value="Chromosome"/>
</dbReference>
<dbReference type="GO" id="GO:0005737">
    <property type="term" value="C:cytoplasm"/>
    <property type="evidence" value="ECO:0007669"/>
    <property type="project" value="UniProtKB-SubCell"/>
</dbReference>
<dbReference type="GO" id="GO:0009380">
    <property type="term" value="C:excinuclease repair complex"/>
    <property type="evidence" value="ECO:0000318"/>
    <property type="project" value="GO_Central"/>
</dbReference>
<dbReference type="GO" id="GO:0005524">
    <property type="term" value="F:ATP binding"/>
    <property type="evidence" value="ECO:0007669"/>
    <property type="project" value="UniProtKB-UniRule"/>
</dbReference>
<dbReference type="GO" id="GO:0016887">
    <property type="term" value="F:ATP hydrolysis activity"/>
    <property type="evidence" value="ECO:0007669"/>
    <property type="project" value="InterPro"/>
</dbReference>
<dbReference type="GO" id="GO:0003677">
    <property type="term" value="F:DNA binding"/>
    <property type="evidence" value="ECO:0007669"/>
    <property type="project" value="UniProtKB-UniRule"/>
</dbReference>
<dbReference type="GO" id="GO:0009381">
    <property type="term" value="F:excinuclease ABC activity"/>
    <property type="evidence" value="ECO:0007669"/>
    <property type="project" value="UniProtKB-UniRule"/>
</dbReference>
<dbReference type="GO" id="GO:0000715">
    <property type="term" value="P:nucleotide-excision repair, DNA damage recognition"/>
    <property type="evidence" value="ECO:0000318"/>
    <property type="project" value="GO_Central"/>
</dbReference>
<dbReference type="GO" id="GO:0009432">
    <property type="term" value="P:SOS response"/>
    <property type="evidence" value="ECO:0007669"/>
    <property type="project" value="UniProtKB-UniRule"/>
</dbReference>
<dbReference type="CDD" id="cd17916">
    <property type="entry name" value="DEXHc_UvrB"/>
    <property type="match status" value="1"/>
</dbReference>
<dbReference type="CDD" id="cd18790">
    <property type="entry name" value="SF2_C_UvrB"/>
    <property type="match status" value="1"/>
</dbReference>
<dbReference type="Gene3D" id="3.40.50.300">
    <property type="entry name" value="P-loop containing nucleotide triphosphate hydrolases"/>
    <property type="match status" value="3"/>
</dbReference>
<dbReference type="Gene3D" id="4.10.860.10">
    <property type="entry name" value="UVR domain"/>
    <property type="match status" value="1"/>
</dbReference>
<dbReference type="HAMAP" id="MF_00204">
    <property type="entry name" value="UvrB"/>
    <property type="match status" value="1"/>
</dbReference>
<dbReference type="InterPro" id="IPR006935">
    <property type="entry name" value="Helicase/UvrB_N"/>
</dbReference>
<dbReference type="InterPro" id="IPR014001">
    <property type="entry name" value="Helicase_ATP-bd"/>
</dbReference>
<dbReference type="InterPro" id="IPR001650">
    <property type="entry name" value="Helicase_C-like"/>
</dbReference>
<dbReference type="InterPro" id="IPR027417">
    <property type="entry name" value="P-loop_NTPase"/>
</dbReference>
<dbReference type="InterPro" id="IPR001943">
    <property type="entry name" value="UVR_dom"/>
</dbReference>
<dbReference type="InterPro" id="IPR036876">
    <property type="entry name" value="UVR_dom_sf"/>
</dbReference>
<dbReference type="InterPro" id="IPR004807">
    <property type="entry name" value="UvrB"/>
</dbReference>
<dbReference type="InterPro" id="IPR041471">
    <property type="entry name" value="UvrB_inter"/>
</dbReference>
<dbReference type="InterPro" id="IPR024759">
    <property type="entry name" value="UvrB_YAD/RRR_dom"/>
</dbReference>
<dbReference type="NCBIfam" id="NF003673">
    <property type="entry name" value="PRK05298.1"/>
    <property type="match status" value="1"/>
</dbReference>
<dbReference type="NCBIfam" id="TIGR00631">
    <property type="entry name" value="uvrb"/>
    <property type="match status" value="1"/>
</dbReference>
<dbReference type="PANTHER" id="PTHR24029">
    <property type="entry name" value="UVRABC SYSTEM PROTEIN B"/>
    <property type="match status" value="1"/>
</dbReference>
<dbReference type="PANTHER" id="PTHR24029:SF0">
    <property type="entry name" value="UVRABC SYSTEM PROTEIN B"/>
    <property type="match status" value="1"/>
</dbReference>
<dbReference type="Pfam" id="PF00271">
    <property type="entry name" value="Helicase_C"/>
    <property type="match status" value="1"/>
</dbReference>
<dbReference type="Pfam" id="PF04851">
    <property type="entry name" value="ResIII"/>
    <property type="match status" value="1"/>
</dbReference>
<dbReference type="Pfam" id="PF02151">
    <property type="entry name" value="UVR"/>
    <property type="match status" value="1"/>
</dbReference>
<dbReference type="Pfam" id="PF12344">
    <property type="entry name" value="UvrB"/>
    <property type="match status" value="1"/>
</dbReference>
<dbReference type="Pfam" id="PF17757">
    <property type="entry name" value="UvrB_inter"/>
    <property type="match status" value="1"/>
</dbReference>
<dbReference type="SMART" id="SM00487">
    <property type="entry name" value="DEXDc"/>
    <property type="match status" value="1"/>
</dbReference>
<dbReference type="SMART" id="SM00490">
    <property type="entry name" value="HELICc"/>
    <property type="match status" value="1"/>
</dbReference>
<dbReference type="SUPFAM" id="SSF46600">
    <property type="entry name" value="C-terminal UvrC-binding domain of UvrB"/>
    <property type="match status" value="1"/>
</dbReference>
<dbReference type="SUPFAM" id="SSF52540">
    <property type="entry name" value="P-loop containing nucleoside triphosphate hydrolases"/>
    <property type="match status" value="2"/>
</dbReference>
<dbReference type="PROSITE" id="PS51192">
    <property type="entry name" value="HELICASE_ATP_BIND_1"/>
    <property type="match status" value="1"/>
</dbReference>
<dbReference type="PROSITE" id="PS51194">
    <property type="entry name" value="HELICASE_CTER"/>
    <property type="match status" value="1"/>
</dbReference>
<dbReference type="PROSITE" id="PS50151">
    <property type="entry name" value="UVR"/>
    <property type="match status" value="1"/>
</dbReference>